<sequence length="454" mass="47993">MTNRTCLAVILAAGEGTRMKSTLPKVLHKIGGLEMVGHVMNAASSAGADALALVVGNGAEQVRAFAEKQTADRRDIFVQEERLGTAHAVLAAREAMSRGYDDVLVVFGDHPLLDPSVLLSAREKLAEGAAVAVLGFRPPVPTGYGRLIEKEGRLVAIREEKDCSEEERKITFCNSGVMAIAGKHALALIDQVKNENAKGEYYLTDIVEIANRQGLLVVASEAGRESAVGINNRAELAEAEAVWQQKRRRELMLSGVTLIAPETVFLSYDTQIGPDTVIEPNVWFGPGVRIASGAHIHAFSHIEEAVVETGATVGPFARLRPGAQVQEKAKIGNFCEIKNARIEPGAKVPHLSYIGDATVGAGANIGAGTITCNYDGFLKHHTEIGAGAFIGTNSALVAPVTIGAGAYVASGSVLTEDVPADALAFGRARQATYEGRGKVLRDKLAEEKAKKSGG</sequence>
<gene>
    <name evidence="1" type="primary">glmU</name>
    <name type="ordered locus">Meso_1770</name>
</gene>
<name>GLMU_CHESB</name>
<feature type="chain" id="PRO_0000263140" description="Bifunctional protein GlmU">
    <location>
        <begin position="1"/>
        <end position="454"/>
    </location>
</feature>
<feature type="region of interest" description="Pyrophosphorylase" evidence="1">
    <location>
        <begin position="1"/>
        <end position="233"/>
    </location>
</feature>
<feature type="region of interest" description="Linker" evidence="1">
    <location>
        <begin position="234"/>
        <end position="254"/>
    </location>
</feature>
<feature type="region of interest" description="N-acetyltransferase" evidence="1">
    <location>
        <begin position="255"/>
        <end position="454"/>
    </location>
</feature>
<feature type="active site" description="Proton acceptor" evidence="1">
    <location>
        <position position="350"/>
    </location>
</feature>
<feature type="binding site" evidence="1">
    <location>
        <begin position="11"/>
        <end position="14"/>
    </location>
    <ligand>
        <name>UDP-N-acetyl-alpha-D-glucosamine</name>
        <dbReference type="ChEBI" id="CHEBI:57705"/>
    </ligand>
</feature>
<feature type="binding site" evidence="1">
    <location>
        <position position="25"/>
    </location>
    <ligand>
        <name>UDP-N-acetyl-alpha-D-glucosamine</name>
        <dbReference type="ChEBI" id="CHEBI:57705"/>
    </ligand>
</feature>
<feature type="binding site" evidence="1">
    <location>
        <position position="79"/>
    </location>
    <ligand>
        <name>UDP-N-acetyl-alpha-D-glucosamine</name>
        <dbReference type="ChEBI" id="CHEBI:57705"/>
    </ligand>
</feature>
<feature type="binding site" evidence="1">
    <location>
        <begin position="84"/>
        <end position="85"/>
    </location>
    <ligand>
        <name>UDP-N-acetyl-alpha-D-glucosamine</name>
        <dbReference type="ChEBI" id="CHEBI:57705"/>
    </ligand>
</feature>
<feature type="binding site" evidence="1">
    <location>
        <position position="109"/>
    </location>
    <ligand>
        <name>Mg(2+)</name>
        <dbReference type="ChEBI" id="CHEBI:18420"/>
    </ligand>
</feature>
<feature type="binding site" evidence="1">
    <location>
        <position position="145"/>
    </location>
    <ligand>
        <name>UDP-N-acetyl-alpha-D-glucosamine</name>
        <dbReference type="ChEBI" id="CHEBI:57705"/>
    </ligand>
</feature>
<feature type="binding site" evidence="1">
    <location>
        <position position="159"/>
    </location>
    <ligand>
        <name>UDP-N-acetyl-alpha-D-glucosamine</name>
        <dbReference type="ChEBI" id="CHEBI:57705"/>
    </ligand>
</feature>
<feature type="binding site" evidence="1">
    <location>
        <position position="174"/>
    </location>
    <ligand>
        <name>UDP-N-acetyl-alpha-D-glucosamine</name>
        <dbReference type="ChEBI" id="CHEBI:57705"/>
    </ligand>
</feature>
<feature type="binding site" evidence="1">
    <location>
        <position position="231"/>
    </location>
    <ligand>
        <name>Mg(2+)</name>
        <dbReference type="ChEBI" id="CHEBI:18420"/>
    </ligand>
</feature>
<feature type="binding site" evidence="1">
    <location>
        <position position="231"/>
    </location>
    <ligand>
        <name>UDP-N-acetyl-alpha-D-glucosamine</name>
        <dbReference type="ChEBI" id="CHEBI:57705"/>
    </ligand>
</feature>
<feature type="binding site" evidence="1">
    <location>
        <position position="320"/>
    </location>
    <ligand>
        <name>UDP-N-acetyl-alpha-D-glucosamine</name>
        <dbReference type="ChEBI" id="CHEBI:57705"/>
    </ligand>
</feature>
<feature type="binding site" evidence="1">
    <location>
        <position position="338"/>
    </location>
    <ligand>
        <name>UDP-N-acetyl-alpha-D-glucosamine</name>
        <dbReference type="ChEBI" id="CHEBI:57705"/>
    </ligand>
</feature>
<feature type="binding site" evidence="1">
    <location>
        <position position="353"/>
    </location>
    <ligand>
        <name>UDP-N-acetyl-alpha-D-glucosamine</name>
        <dbReference type="ChEBI" id="CHEBI:57705"/>
    </ligand>
</feature>
<feature type="binding site" evidence="1">
    <location>
        <position position="364"/>
    </location>
    <ligand>
        <name>UDP-N-acetyl-alpha-D-glucosamine</name>
        <dbReference type="ChEBI" id="CHEBI:57705"/>
    </ligand>
</feature>
<feature type="binding site" evidence="1">
    <location>
        <position position="367"/>
    </location>
    <ligand>
        <name>acetyl-CoA</name>
        <dbReference type="ChEBI" id="CHEBI:57288"/>
    </ligand>
</feature>
<feature type="binding site" evidence="1">
    <location>
        <begin position="373"/>
        <end position="374"/>
    </location>
    <ligand>
        <name>acetyl-CoA</name>
        <dbReference type="ChEBI" id="CHEBI:57288"/>
    </ligand>
</feature>
<feature type="binding site" evidence="1">
    <location>
        <position position="410"/>
    </location>
    <ligand>
        <name>acetyl-CoA</name>
        <dbReference type="ChEBI" id="CHEBI:57288"/>
    </ligand>
</feature>
<feature type="binding site" evidence="1">
    <location>
        <position position="427"/>
    </location>
    <ligand>
        <name>acetyl-CoA</name>
        <dbReference type="ChEBI" id="CHEBI:57288"/>
    </ligand>
</feature>
<evidence type="ECO:0000255" key="1">
    <source>
        <dbReference type="HAMAP-Rule" id="MF_01631"/>
    </source>
</evidence>
<reference key="1">
    <citation type="submission" date="2006-06" db="EMBL/GenBank/DDBJ databases">
        <title>Complete sequence of chromosome of Mesorhizobium sp. BNC1.</title>
        <authorList>
            <consortium name="US DOE Joint Genome Institute"/>
            <person name="Copeland A."/>
            <person name="Lucas S."/>
            <person name="Lapidus A."/>
            <person name="Barry K."/>
            <person name="Detter J.C."/>
            <person name="Glavina del Rio T."/>
            <person name="Hammon N."/>
            <person name="Israni S."/>
            <person name="Dalin E."/>
            <person name="Tice H."/>
            <person name="Pitluck S."/>
            <person name="Chertkov O."/>
            <person name="Brettin T."/>
            <person name="Bruce D."/>
            <person name="Han C."/>
            <person name="Tapia R."/>
            <person name="Gilna P."/>
            <person name="Schmutz J."/>
            <person name="Larimer F."/>
            <person name="Land M."/>
            <person name="Hauser L."/>
            <person name="Kyrpides N."/>
            <person name="Mikhailova N."/>
            <person name="Richardson P."/>
        </authorList>
    </citation>
    <scope>NUCLEOTIDE SEQUENCE [LARGE SCALE GENOMIC DNA]</scope>
    <source>
        <strain>BNC1</strain>
    </source>
</reference>
<keyword id="KW-0012">Acyltransferase</keyword>
<keyword id="KW-0133">Cell shape</keyword>
<keyword id="KW-0961">Cell wall biogenesis/degradation</keyword>
<keyword id="KW-0963">Cytoplasm</keyword>
<keyword id="KW-0460">Magnesium</keyword>
<keyword id="KW-0479">Metal-binding</keyword>
<keyword id="KW-0511">Multifunctional enzyme</keyword>
<keyword id="KW-0548">Nucleotidyltransferase</keyword>
<keyword id="KW-0573">Peptidoglycan synthesis</keyword>
<keyword id="KW-0677">Repeat</keyword>
<keyword id="KW-0808">Transferase</keyword>
<organism>
    <name type="scientific">Chelativorans sp. (strain BNC1)</name>
    <dbReference type="NCBI Taxonomy" id="266779"/>
    <lineage>
        <taxon>Bacteria</taxon>
        <taxon>Pseudomonadati</taxon>
        <taxon>Pseudomonadota</taxon>
        <taxon>Alphaproteobacteria</taxon>
        <taxon>Hyphomicrobiales</taxon>
        <taxon>Phyllobacteriaceae</taxon>
        <taxon>Chelativorans</taxon>
    </lineage>
</organism>
<protein>
    <recommendedName>
        <fullName evidence="1">Bifunctional protein GlmU</fullName>
    </recommendedName>
    <domain>
        <recommendedName>
            <fullName evidence="1">UDP-N-acetylglucosamine pyrophosphorylase</fullName>
            <ecNumber evidence="1">2.7.7.23</ecNumber>
        </recommendedName>
        <alternativeName>
            <fullName evidence="1">N-acetylglucosamine-1-phosphate uridyltransferase</fullName>
        </alternativeName>
    </domain>
    <domain>
        <recommendedName>
            <fullName evidence="1">Glucosamine-1-phosphate N-acetyltransferase</fullName>
            <ecNumber evidence="1">2.3.1.157</ecNumber>
        </recommendedName>
    </domain>
</protein>
<comment type="function">
    <text evidence="1">Catalyzes the last two sequential reactions in the de novo biosynthetic pathway for UDP-N-acetylglucosamine (UDP-GlcNAc). The C-terminal domain catalyzes the transfer of acetyl group from acetyl coenzyme A to glucosamine-1-phosphate (GlcN-1-P) to produce N-acetylglucosamine-1-phosphate (GlcNAc-1-P), which is converted into UDP-GlcNAc by the transfer of uridine 5-monophosphate (from uridine 5-triphosphate), a reaction catalyzed by the N-terminal domain.</text>
</comment>
<comment type="catalytic activity">
    <reaction evidence="1">
        <text>alpha-D-glucosamine 1-phosphate + acetyl-CoA = N-acetyl-alpha-D-glucosamine 1-phosphate + CoA + H(+)</text>
        <dbReference type="Rhea" id="RHEA:13725"/>
        <dbReference type="ChEBI" id="CHEBI:15378"/>
        <dbReference type="ChEBI" id="CHEBI:57287"/>
        <dbReference type="ChEBI" id="CHEBI:57288"/>
        <dbReference type="ChEBI" id="CHEBI:57776"/>
        <dbReference type="ChEBI" id="CHEBI:58516"/>
        <dbReference type="EC" id="2.3.1.157"/>
    </reaction>
</comment>
<comment type="catalytic activity">
    <reaction evidence="1">
        <text>N-acetyl-alpha-D-glucosamine 1-phosphate + UTP + H(+) = UDP-N-acetyl-alpha-D-glucosamine + diphosphate</text>
        <dbReference type="Rhea" id="RHEA:13509"/>
        <dbReference type="ChEBI" id="CHEBI:15378"/>
        <dbReference type="ChEBI" id="CHEBI:33019"/>
        <dbReference type="ChEBI" id="CHEBI:46398"/>
        <dbReference type="ChEBI" id="CHEBI:57705"/>
        <dbReference type="ChEBI" id="CHEBI:57776"/>
        <dbReference type="EC" id="2.7.7.23"/>
    </reaction>
</comment>
<comment type="cofactor">
    <cofactor evidence="1">
        <name>Mg(2+)</name>
        <dbReference type="ChEBI" id="CHEBI:18420"/>
    </cofactor>
    <text evidence="1">Binds 1 Mg(2+) ion per subunit.</text>
</comment>
<comment type="pathway">
    <text evidence="1">Nucleotide-sugar biosynthesis; UDP-N-acetyl-alpha-D-glucosamine biosynthesis; N-acetyl-alpha-D-glucosamine 1-phosphate from alpha-D-glucosamine 6-phosphate (route II): step 2/2.</text>
</comment>
<comment type="pathway">
    <text evidence="1">Nucleotide-sugar biosynthesis; UDP-N-acetyl-alpha-D-glucosamine biosynthesis; UDP-N-acetyl-alpha-D-glucosamine from N-acetyl-alpha-D-glucosamine 1-phosphate: step 1/1.</text>
</comment>
<comment type="pathway">
    <text evidence="1">Bacterial outer membrane biogenesis; LPS lipid A biosynthesis.</text>
</comment>
<comment type="subunit">
    <text evidence="1">Homotrimer.</text>
</comment>
<comment type="subcellular location">
    <subcellularLocation>
        <location evidence="1">Cytoplasm</location>
    </subcellularLocation>
</comment>
<comment type="similarity">
    <text evidence="1">In the N-terminal section; belongs to the N-acetylglucosamine-1-phosphate uridyltransferase family.</text>
</comment>
<comment type="similarity">
    <text evidence="1">In the C-terminal section; belongs to the transferase hexapeptide repeat family.</text>
</comment>
<proteinExistence type="inferred from homology"/>
<accession>Q11HG1</accession>
<dbReference type="EC" id="2.7.7.23" evidence="1"/>
<dbReference type="EC" id="2.3.1.157" evidence="1"/>
<dbReference type="EMBL" id="CP000390">
    <property type="protein sequence ID" value="ABG63164.1"/>
    <property type="molecule type" value="Genomic_DNA"/>
</dbReference>
<dbReference type="SMR" id="Q11HG1"/>
<dbReference type="STRING" id="266779.Meso_1770"/>
<dbReference type="KEGG" id="mes:Meso_1770"/>
<dbReference type="eggNOG" id="COG1207">
    <property type="taxonomic scope" value="Bacteria"/>
</dbReference>
<dbReference type="HOGENOM" id="CLU_029499_15_2_5"/>
<dbReference type="OrthoDB" id="9775031at2"/>
<dbReference type="UniPathway" id="UPA00113">
    <property type="reaction ID" value="UER00532"/>
</dbReference>
<dbReference type="UniPathway" id="UPA00113">
    <property type="reaction ID" value="UER00533"/>
</dbReference>
<dbReference type="UniPathway" id="UPA00973"/>
<dbReference type="GO" id="GO:0005737">
    <property type="term" value="C:cytoplasm"/>
    <property type="evidence" value="ECO:0007669"/>
    <property type="project" value="UniProtKB-SubCell"/>
</dbReference>
<dbReference type="GO" id="GO:0016020">
    <property type="term" value="C:membrane"/>
    <property type="evidence" value="ECO:0007669"/>
    <property type="project" value="GOC"/>
</dbReference>
<dbReference type="GO" id="GO:0019134">
    <property type="term" value="F:glucosamine-1-phosphate N-acetyltransferase activity"/>
    <property type="evidence" value="ECO:0007669"/>
    <property type="project" value="UniProtKB-UniRule"/>
</dbReference>
<dbReference type="GO" id="GO:0000287">
    <property type="term" value="F:magnesium ion binding"/>
    <property type="evidence" value="ECO:0007669"/>
    <property type="project" value="UniProtKB-UniRule"/>
</dbReference>
<dbReference type="GO" id="GO:0003977">
    <property type="term" value="F:UDP-N-acetylglucosamine diphosphorylase activity"/>
    <property type="evidence" value="ECO:0007669"/>
    <property type="project" value="UniProtKB-UniRule"/>
</dbReference>
<dbReference type="GO" id="GO:0000902">
    <property type="term" value="P:cell morphogenesis"/>
    <property type="evidence" value="ECO:0007669"/>
    <property type="project" value="UniProtKB-UniRule"/>
</dbReference>
<dbReference type="GO" id="GO:0071555">
    <property type="term" value="P:cell wall organization"/>
    <property type="evidence" value="ECO:0007669"/>
    <property type="project" value="UniProtKB-KW"/>
</dbReference>
<dbReference type="GO" id="GO:0009245">
    <property type="term" value="P:lipid A biosynthetic process"/>
    <property type="evidence" value="ECO:0007669"/>
    <property type="project" value="UniProtKB-UniRule"/>
</dbReference>
<dbReference type="GO" id="GO:0009252">
    <property type="term" value="P:peptidoglycan biosynthetic process"/>
    <property type="evidence" value="ECO:0007669"/>
    <property type="project" value="UniProtKB-UniRule"/>
</dbReference>
<dbReference type="GO" id="GO:0008360">
    <property type="term" value="P:regulation of cell shape"/>
    <property type="evidence" value="ECO:0007669"/>
    <property type="project" value="UniProtKB-KW"/>
</dbReference>
<dbReference type="GO" id="GO:0006048">
    <property type="term" value="P:UDP-N-acetylglucosamine biosynthetic process"/>
    <property type="evidence" value="ECO:0007669"/>
    <property type="project" value="UniProtKB-UniPathway"/>
</dbReference>
<dbReference type="CDD" id="cd02540">
    <property type="entry name" value="GT2_GlmU_N_bac"/>
    <property type="match status" value="1"/>
</dbReference>
<dbReference type="CDD" id="cd03353">
    <property type="entry name" value="LbH_GlmU_C"/>
    <property type="match status" value="1"/>
</dbReference>
<dbReference type="Gene3D" id="2.160.10.10">
    <property type="entry name" value="Hexapeptide repeat proteins"/>
    <property type="match status" value="1"/>
</dbReference>
<dbReference type="Gene3D" id="3.90.550.10">
    <property type="entry name" value="Spore Coat Polysaccharide Biosynthesis Protein SpsA, Chain A"/>
    <property type="match status" value="1"/>
</dbReference>
<dbReference type="HAMAP" id="MF_01631">
    <property type="entry name" value="GlmU"/>
    <property type="match status" value="1"/>
</dbReference>
<dbReference type="InterPro" id="IPR005882">
    <property type="entry name" value="Bifunctional_GlmU"/>
</dbReference>
<dbReference type="InterPro" id="IPR050065">
    <property type="entry name" value="GlmU-like"/>
</dbReference>
<dbReference type="InterPro" id="IPR038009">
    <property type="entry name" value="GlmU_C_LbH"/>
</dbReference>
<dbReference type="InterPro" id="IPR001451">
    <property type="entry name" value="Hexapep"/>
</dbReference>
<dbReference type="InterPro" id="IPR018357">
    <property type="entry name" value="Hexapep_transf_CS"/>
</dbReference>
<dbReference type="InterPro" id="IPR025877">
    <property type="entry name" value="MobA-like_NTP_Trfase"/>
</dbReference>
<dbReference type="InterPro" id="IPR029044">
    <property type="entry name" value="Nucleotide-diphossugar_trans"/>
</dbReference>
<dbReference type="InterPro" id="IPR011004">
    <property type="entry name" value="Trimer_LpxA-like_sf"/>
</dbReference>
<dbReference type="NCBIfam" id="TIGR01173">
    <property type="entry name" value="glmU"/>
    <property type="match status" value="1"/>
</dbReference>
<dbReference type="NCBIfam" id="NF010933">
    <property type="entry name" value="PRK14353.1"/>
    <property type="match status" value="1"/>
</dbReference>
<dbReference type="PANTHER" id="PTHR43584:SF3">
    <property type="entry name" value="BIFUNCTIONAL PROTEIN GLMU"/>
    <property type="match status" value="1"/>
</dbReference>
<dbReference type="PANTHER" id="PTHR43584">
    <property type="entry name" value="NUCLEOTIDYL TRANSFERASE"/>
    <property type="match status" value="1"/>
</dbReference>
<dbReference type="Pfam" id="PF00132">
    <property type="entry name" value="Hexapep"/>
    <property type="match status" value="1"/>
</dbReference>
<dbReference type="Pfam" id="PF12804">
    <property type="entry name" value="NTP_transf_3"/>
    <property type="match status" value="1"/>
</dbReference>
<dbReference type="SUPFAM" id="SSF53448">
    <property type="entry name" value="Nucleotide-diphospho-sugar transferases"/>
    <property type="match status" value="1"/>
</dbReference>
<dbReference type="SUPFAM" id="SSF51161">
    <property type="entry name" value="Trimeric LpxA-like enzymes"/>
    <property type="match status" value="1"/>
</dbReference>
<dbReference type="PROSITE" id="PS00101">
    <property type="entry name" value="HEXAPEP_TRANSFERASES"/>
    <property type="match status" value="1"/>
</dbReference>